<evidence type="ECO:0000255" key="1">
    <source>
        <dbReference type="HAMAP-Rule" id="MF_01568"/>
    </source>
</evidence>
<name>NTDP_STREM</name>
<dbReference type="EC" id="3.6.1.15" evidence="1"/>
<dbReference type="EC" id="3.6.1.6" evidence="1"/>
<dbReference type="EMBL" id="CP001129">
    <property type="protein sequence ID" value="ACG62875.1"/>
    <property type="molecule type" value="Genomic_DNA"/>
</dbReference>
<dbReference type="RefSeq" id="WP_012516131.1">
    <property type="nucleotide sequence ID" value="NC_011134.1"/>
</dbReference>
<dbReference type="SMR" id="B4U4F8"/>
<dbReference type="KEGG" id="sez:Sez_1542"/>
<dbReference type="HOGENOM" id="CLU_109787_1_0_9"/>
<dbReference type="Proteomes" id="UP000001873">
    <property type="component" value="Chromosome"/>
</dbReference>
<dbReference type="GO" id="GO:0000287">
    <property type="term" value="F:magnesium ion binding"/>
    <property type="evidence" value="ECO:0007669"/>
    <property type="project" value="UniProtKB-UniRule"/>
</dbReference>
<dbReference type="GO" id="GO:0017110">
    <property type="term" value="F:nucleoside diphosphate phosphatase activity"/>
    <property type="evidence" value="ECO:0007669"/>
    <property type="project" value="UniProtKB-UniRule"/>
</dbReference>
<dbReference type="GO" id="GO:0017111">
    <property type="term" value="F:ribonucleoside triphosphate phosphatase activity"/>
    <property type="evidence" value="ECO:0007669"/>
    <property type="project" value="UniProtKB-UniRule"/>
</dbReference>
<dbReference type="Gene3D" id="2.40.380.10">
    <property type="entry name" value="FomD-like"/>
    <property type="match status" value="1"/>
</dbReference>
<dbReference type="HAMAP" id="MF_01568">
    <property type="entry name" value="Ntdp"/>
    <property type="match status" value="1"/>
</dbReference>
<dbReference type="InterPro" id="IPR007295">
    <property type="entry name" value="DUF402"/>
</dbReference>
<dbReference type="InterPro" id="IPR035930">
    <property type="entry name" value="FomD-like_sf"/>
</dbReference>
<dbReference type="InterPro" id="IPR050212">
    <property type="entry name" value="Ntdp-like"/>
</dbReference>
<dbReference type="InterPro" id="IPR016882">
    <property type="entry name" value="SA1684"/>
</dbReference>
<dbReference type="NCBIfam" id="NF010183">
    <property type="entry name" value="PRK13662.1"/>
    <property type="match status" value="1"/>
</dbReference>
<dbReference type="PANTHER" id="PTHR39159">
    <property type="match status" value="1"/>
</dbReference>
<dbReference type="PANTHER" id="PTHR39159:SF1">
    <property type="entry name" value="UPF0374 PROTEIN YGAC"/>
    <property type="match status" value="1"/>
</dbReference>
<dbReference type="Pfam" id="PF04167">
    <property type="entry name" value="DUF402"/>
    <property type="match status" value="1"/>
</dbReference>
<dbReference type="PIRSF" id="PIRSF028345">
    <property type="entry name" value="UCP028345"/>
    <property type="match status" value="1"/>
</dbReference>
<dbReference type="SUPFAM" id="SSF159234">
    <property type="entry name" value="FomD-like"/>
    <property type="match status" value="1"/>
</dbReference>
<protein>
    <recommendedName>
        <fullName evidence="1">Nucleoside triphosphate/diphosphate phosphatase</fullName>
        <ecNumber evidence="1">3.6.1.15</ecNumber>
        <ecNumber evidence="1">3.6.1.6</ecNumber>
    </recommendedName>
</protein>
<gene>
    <name type="ordered locus">Sez_1542</name>
</gene>
<reference key="1">
    <citation type="journal article" date="2008" name="PLoS ONE">
        <title>Genome sequence of a lancefield group C Streptococcus zooepidemicus strain causing epidemic nephritis: new information about an old disease.</title>
        <authorList>
            <person name="Beres S.B."/>
            <person name="Sesso R."/>
            <person name="Pinto S.W.L."/>
            <person name="Hoe N.P."/>
            <person name="Porcella S.F."/>
            <person name="Deleo F.R."/>
            <person name="Musser J.M."/>
        </authorList>
    </citation>
    <scope>NUCLEOTIDE SEQUENCE [LARGE SCALE GENOMIC DNA]</scope>
    <source>
        <strain>MGCS10565</strain>
    </source>
</reference>
<keyword id="KW-0378">Hydrolase</keyword>
<keyword id="KW-0460">Magnesium</keyword>
<keyword id="KW-0479">Metal-binding</keyword>
<accession>B4U4F8</accession>
<proteinExistence type="inferred from homology"/>
<feature type="chain" id="PRO_1000199753" description="Nucleoside triphosphate/diphosphate phosphatase">
    <location>
        <begin position="1"/>
        <end position="177"/>
    </location>
</feature>
<feature type="active site" description="Proton donor" evidence="1">
    <location>
        <position position="23"/>
    </location>
</feature>
<feature type="binding site" evidence="1">
    <location>
        <position position="87"/>
    </location>
    <ligand>
        <name>Mg(2+)</name>
        <dbReference type="ChEBI" id="CHEBI:18420"/>
        <label>1</label>
    </ligand>
</feature>
<feature type="binding site" evidence="1">
    <location>
        <position position="103"/>
    </location>
    <ligand>
        <name>Mg(2+)</name>
        <dbReference type="ChEBI" id="CHEBI:18420"/>
        <label>1</label>
    </ligand>
</feature>
<feature type="binding site" evidence="1">
    <location>
        <position position="105"/>
    </location>
    <ligand>
        <name>Mg(2+)</name>
        <dbReference type="ChEBI" id="CHEBI:18420"/>
        <label>2</label>
    </ligand>
</feature>
<feature type="binding site" evidence="1">
    <location>
        <position position="107"/>
    </location>
    <ligand>
        <name>Mg(2+)</name>
        <dbReference type="ChEBI" id="CHEBI:18420"/>
        <label>1</label>
    </ligand>
</feature>
<feature type="binding site" evidence="1">
    <location>
        <position position="107"/>
    </location>
    <ligand>
        <name>Mg(2+)</name>
        <dbReference type="ChEBI" id="CHEBI:18420"/>
        <label>2</label>
    </ligand>
</feature>
<feature type="binding site" evidence="1">
    <location>
        <position position="120"/>
    </location>
    <ligand>
        <name>Mg(2+)</name>
        <dbReference type="ChEBI" id="CHEBI:18420"/>
        <label>2</label>
    </ligand>
</feature>
<feature type="binding site" evidence="1">
    <location>
        <position position="123"/>
    </location>
    <ligand>
        <name>Mg(2+)</name>
        <dbReference type="ChEBI" id="CHEBI:18420"/>
        <label>2</label>
    </ligand>
</feature>
<sequence>MKLPKEGDFITIQSYKHDGRLHRTWRDTMVLKTTENALIGVNDHTLVTESDGRRWVTREPAIVYFHKKYWFNIIAMIRDNGVSYYCNLASPYLMDAEALKYIDYDLDVKVFADGEKRLLDVDEYEMHKQEMHYSPNLDFILKENVKLLVDWINKEKGPFSKAYVSIWYKRYLELKNR</sequence>
<organism>
    <name type="scientific">Streptococcus equi subsp. zooepidemicus (strain MGCS10565)</name>
    <dbReference type="NCBI Taxonomy" id="552526"/>
    <lineage>
        <taxon>Bacteria</taxon>
        <taxon>Bacillati</taxon>
        <taxon>Bacillota</taxon>
        <taxon>Bacilli</taxon>
        <taxon>Lactobacillales</taxon>
        <taxon>Streptococcaceae</taxon>
        <taxon>Streptococcus</taxon>
    </lineage>
</organism>
<comment type="function">
    <text evidence="1">Has nucleoside phosphatase activity towards nucleoside triphosphates and nucleoside diphosphates.</text>
</comment>
<comment type="catalytic activity">
    <reaction evidence="1">
        <text>a ribonucleoside 5'-triphosphate + H2O = a ribonucleoside 5'-diphosphate + phosphate + H(+)</text>
        <dbReference type="Rhea" id="RHEA:23680"/>
        <dbReference type="ChEBI" id="CHEBI:15377"/>
        <dbReference type="ChEBI" id="CHEBI:15378"/>
        <dbReference type="ChEBI" id="CHEBI:43474"/>
        <dbReference type="ChEBI" id="CHEBI:57930"/>
        <dbReference type="ChEBI" id="CHEBI:61557"/>
        <dbReference type="EC" id="3.6.1.15"/>
    </reaction>
</comment>
<comment type="catalytic activity">
    <reaction evidence="1">
        <text>a ribonucleoside 5'-diphosphate + H2O = a ribonucleoside 5'-phosphate + phosphate + H(+)</text>
        <dbReference type="Rhea" id="RHEA:36799"/>
        <dbReference type="ChEBI" id="CHEBI:15377"/>
        <dbReference type="ChEBI" id="CHEBI:15378"/>
        <dbReference type="ChEBI" id="CHEBI:43474"/>
        <dbReference type="ChEBI" id="CHEBI:57930"/>
        <dbReference type="ChEBI" id="CHEBI:58043"/>
        <dbReference type="EC" id="3.6.1.6"/>
    </reaction>
</comment>
<comment type="cofactor">
    <cofactor evidence="1">
        <name>Mg(2+)</name>
        <dbReference type="ChEBI" id="CHEBI:18420"/>
    </cofactor>
</comment>
<comment type="similarity">
    <text evidence="1">Belongs to the Ntdp family.</text>
</comment>